<protein>
    <recommendedName>
        <fullName>Phosphoribulokinase</fullName>
        <shortName>PRK</shortName>
        <shortName>PRKase</shortName>
        <ecNumber>2.7.1.19</ecNumber>
    </recommendedName>
    <alternativeName>
        <fullName>Phosphopentokinase</fullName>
    </alternativeName>
</protein>
<gene>
    <name type="primary">cbbP</name>
    <name type="ordered locus">Smed_3921</name>
</gene>
<sequence>MSAKYPIISITGSSGAGTTTVKDTFEKIFKRENISASFIEGDAFHRYDRETMRSKIAEEKARGVDFTHFSAEANELEILESVFAEYGRRGVGRTRHYVHDDAEAVKFGSDPGTFTDWEEFRDSDLLFYEGLHGCAVTDTINLAQHCDLKIGVVPVINLEWIQKIHRDKATRGYSTEAVTDTILRRMPDYVHYICPQFSLTDINFQRVPIVDTSNPFIARWIPTPAESILVIRFAKPQSIDFPYLLSMLHNSYMSRANSIVVPGDKLDLAMQLIFTPLIHKLLERKHRMS</sequence>
<reference key="1">
    <citation type="submission" date="1999-12" db="EMBL/GenBank/DDBJ databases">
        <title>Genetic regulation of C1 metabolism in Sinorhizobium meliloti.</title>
        <authorList>
            <person name="Fenner B.J."/>
            <person name="Tiwari R.P."/>
            <person name="Dilworth M.J."/>
        </authorList>
    </citation>
    <scope>NUCLEOTIDE SEQUENCE [GENOMIC DNA]</scope>
</reference>
<reference key="2">
    <citation type="submission" date="2007-06" db="EMBL/GenBank/DDBJ databases">
        <title>Complete sequence of Sinorhizobium medicae WSM419 plasmid pSMED01.</title>
        <authorList>
            <consortium name="US DOE Joint Genome Institute"/>
            <person name="Copeland A."/>
            <person name="Lucas S."/>
            <person name="Lapidus A."/>
            <person name="Barry K."/>
            <person name="Glavina del Rio T."/>
            <person name="Dalin E."/>
            <person name="Tice H."/>
            <person name="Pitluck S."/>
            <person name="Chain P."/>
            <person name="Malfatti S."/>
            <person name="Shin M."/>
            <person name="Vergez L."/>
            <person name="Schmutz J."/>
            <person name="Larimer F."/>
            <person name="Land M."/>
            <person name="Hauser L."/>
            <person name="Kyrpides N."/>
            <person name="Mikhailova N."/>
            <person name="Reeve W.G."/>
            <person name="Richardson P."/>
        </authorList>
    </citation>
    <scope>NUCLEOTIDE SEQUENCE [LARGE SCALE GENOMIC DNA]</scope>
    <source>
        <strain>WSM419</strain>
    </source>
</reference>
<keyword id="KW-0067">ATP-binding</keyword>
<keyword id="KW-0113">Calvin cycle</keyword>
<keyword id="KW-0418">Kinase</keyword>
<keyword id="KW-0547">Nucleotide-binding</keyword>
<keyword id="KW-0614">Plasmid</keyword>
<keyword id="KW-0808">Transferase</keyword>
<comment type="catalytic activity">
    <reaction>
        <text>D-ribulose 5-phosphate + ATP = D-ribulose 1,5-bisphosphate + ADP + H(+)</text>
        <dbReference type="Rhea" id="RHEA:19365"/>
        <dbReference type="ChEBI" id="CHEBI:15378"/>
        <dbReference type="ChEBI" id="CHEBI:30616"/>
        <dbReference type="ChEBI" id="CHEBI:57870"/>
        <dbReference type="ChEBI" id="CHEBI:58121"/>
        <dbReference type="ChEBI" id="CHEBI:456216"/>
        <dbReference type="EC" id="2.7.1.19"/>
    </reaction>
</comment>
<comment type="pathway">
    <text>Carbohydrate biosynthesis; Calvin cycle.</text>
</comment>
<comment type="similarity">
    <text evidence="2">Belongs to the phosphoribulokinase family.</text>
</comment>
<name>KPPR_SINMW</name>
<dbReference type="EC" id="2.7.1.19"/>
<dbReference type="EMBL" id="AF211846">
    <property type="protein sequence ID" value="AAF25376.1"/>
    <property type="molecule type" value="Genomic_DNA"/>
</dbReference>
<dbReference type="EMBL" id="CP000739">
    <property type="protein sequence ID" value="ABR62731.1"/>
    <property type="molecule type" value="Genomic_DNA"/>
</dbReference>
<dbReference type="RefSeq" id="WP_011969553.1">
    <property type="nucleotide sequence ID" value="NC_009620.1"/>
</dbReference>
<dbReference type="RefSeq" id="YP_001312664.1">
    <property type="nucleotide sequence ID" value="NC_009620.1"/>
</dbReference>
<dbReference type="SMR" id="P56887"/>
<dbReference type="KEGG" id="smd:Smed_3921"/>
<dbReference type="PATRIC" id="fig|366394.8.peg.367"/>
<dbReference type="HOGENOM" id="CLU_962223_0_0_5"/>
<dbReference type="OrthoDB" id="9773443at2"/>
<dbReference type="UniPathway" id="UPA00116"/>
<dbReference type="Proteomes" id="UP000001108">
    <property type="component" value="Plasmid pSMED01"/>
</dbReference>
<dbReference type="GO" id="GO:0005524">
    <property type="term" value="F:ATP binding"/>
    <property type="evidence" value="ECO:0007669"/>
    <property type="project" value="UniProtKB-KW"/>
</dbReference>
<dbReference type="GO" id="GO:0008974">
    <property type="term" value="F:phosphoribulokinase activity"/>
    <property type="evidence" value="ECO:0007669"/>
    <property type="project" value="UniProtKB-EC"/>
</dbReference>
<dbReference type="GO" id="GO:0019253">
    <property type="term" value="P:reductive pentose-phosphate cycle"/>
    <property type="evidence" value="ECO:0007669"/>
    <property type="project" value="UniProtKB-UniPathway"/>
</dbReference>
<dbReference type="Gene3D" id="3.40.50.300">
    <property type="entry name" value="P-loop containing nucleotide triphosphate hydrolases"/>
    <property type="match status" value="1"/>
</dbReference>
<dbReference type="InterPro" id="IPR027417">
    <property type="entry name" value="P-loop_NTPase"/>
</dbReference>
<dbReference type="InterPro" id="IPR006082">
    <property type="entry name" value="PRK"/>
</dbReference>
<dbReference type="InterPro" id="IPR006083">
    <property type="entry name" value="PRK/URK"/>
</dbReference>
<dbReference type="NCBIfam" id="NF011997">
    <property type="entry name" value="PRK15453.1"/>
    <property type="match status" value="1"/>
</dbReference>
<dbReference type="Pfam" id="PF00485">
    <property type="entry name" value="PRK"/>
    <property type="match status" value="1"/>
</dbReference>
<dbReference type="PRINTS" id="PR00478">
    <property type="entry name" value="PHRIBLKINASE"/>
</dbReference>
<dbReference type="SUPFAM" id="SSF52540">
    <property type="entry name" value="P-loop containing nucleoside triphosphate hydrolases"/>
    <property type="match status" value="1"/>
</dbReference>
<dbReference type="PROSITE" id="PS00567">
    <property type="entry name" value="PHOSPHORIBULOKINASE"/>
    <property type="match status" value="1"/>
</dbReference>
<feature type="chain" id="PRO_0000201956" description="Phosphoribulokinase">
    <location>
        <begin position="1"/>
        <end position="289"/>
    </location>
</feature>
<feature type="binding site" evidence="1">
    <location>
        <begin position="12"/>
        <end position="20"/>
    </location>
    <ligand>
        <name>ATP</name>
        <dbReference type="ChEBI" id="CHEBI:30616"/>
    </ligand>
</feature>
<feature type="sequence conflict" description="In Ref. 1; AAF25376." evidence="2" ref="1">
    <original>E</original>
    <variation>D</variation>
    <location>
        <position position="77"/>
    </location>
</feature>
<feature type="sequence conflict" description="In Ref. 1; AAF25376." evidence="2" ref="1">
    <original>E</original>
    <variation>Q</variation>
    <location>
        <position position="80"/>
    </location>
</feature>
<feature type="sequence conflict" description="In Ref. 1; AAF25376." evidence="2" ref="1">
    <original>H</original>
    <variation>N</variation>
    <location>
        <position position="279"/>
    </location>
</feature>
<feature type="sequence conflict" description="In Ref. 1; AAF25376." evidence="2" ref="1">
    <original>L</original>
    <variation>I</variation>
    <location>
        <position position="282"/>
    </location>
</feature>
<accession>P56887</accession>
<accession>A6UGF1</accession>
<organism>
    <name type="scientific">Sinorhizobium medicae (strain WSM419)</name>
    <name type="common">Ensifer medicae</name>
    <dbReference type="NCBI Taxonomy" id="366394"/>
    <lineage>
        <taxon>Bacteria</taxon>
        <taxon>Pseudomonadati</taxon>
        <taxon>Pseudomonadota</taxon>
        <taxon>Alphaproteobacteria</taxon>
        <taxon>Hyphomicrobiales</taxon>
        <taxon>Rhizobiaceae</taxon>
        <taxon>Sinorhizobium/Ensifer group</taxon>
        <taxon>Sinorhizobium</taxon>
    </lineage>
</organism>
<geneLocation type="plasmid">
    <name>pSMED01</name>
</geneLocation>
<proteinExistence type="inferred from homology"/>
<evidence type="ECO:0000250" key="1"/>
<evidence type="ECO:0000305" key="2"/>